<comment type="function">
    <text evidence="1">Catalyzes the condensation of ATP and 5-phosphoribose 1-diphosphate to form N'-(5'-phosphoribosyl)-ATP (PR-ATP). Has a crucial role in the pathway because the rate of histidine biosynthesis seems to be controlled primarily by regulation of HisG enzymatic activity.</text>
</comment>
<comment type="catalytic activity">
    <reaction evidence="1">
        <text>1-(5-phospho-beta-D-ribosyl)-ATP + diphosphate = 5-phospho-alpha-D-ribose 1-diphosphate + ATP</text>
        <dbReference type="Rhea" id="RHEA:18473"/>
        <dbReference type="ChEBI" id="CHEBI:30616"/>
        <dbReference type="ChEBI" id="CHEBI:33019"/>
        <dbReference type="ChEBI" id="CHEBI:58017"/>
        <dbReference type="ChEBI" id="CHEBI:73183"/>
        <dbReference type="EC" id="2.4.2.17"/>
    </reaction>
</comment>
<comment type="pathway">
    <text evidence="1">Amino-acid biosynthesis; L-histidine biosynthesis; L-histidine from 5-phospho-alpha-D-ribose 1-diphosphate: step 1/9.</text>
</comment>
<comment type="subunit">
    <text evidence="1">Heteromultimer composed of HisG and HisZ subunits.</text>
</comment>
<comment type="subcellular location">
    <subcellularLocation>
        <location evidence="1">Cytoplasm</location>
    </subcellularLocation>
</comment>
<comment type="domain">
    <text>Lacks the C-terminal regulatory region which is replaced by HisZ.</text>
</comment>
<comment type="similarity">
    <text evidence="1">Belongs to the ATP phosphoribosyltransferase family. Short subfamily.</text>
</comment>
<protein>
    <recommendedName>
        <fullName evidence="1">ATP phosphoribosyltransferase</fullName>
        <shortName evidence="1">ATP-PRT</shortName>
        <shortName evidence="1">ATP-PRTase</shortName>
        <ecNumber evidence="1">2.4.2.17</ecNumber>
    </recommendedName>
</protein>
<organism>
    <name type="scientific">Pseudomonas putida (strain GB-1)</name>
    <dbReference type="NCBI Taxonomy" id="76869"/>
    <lineage>
        <taxon>Bacteria</taxon>
        <taxon>Pseudomonadati</taxon>
        <taxon>Pseudomonadota</taxon>
        <taxon>Gammaproteobacteria</taxon>
        <taxon>Pseudomonadales</taxon>
        <taxon>Pseudomonadaceae</taxon>
        <taxon>Pseudomonas</taxon>
    </lineage>
</organism>
<accession>B0KQJ4</accession>
<sequence>MLTIALSKGRILDDTLPLLAEAGIVPTENPDKSRKLIIPTTQDDVRLLIVRATDVPTYVEHGAADLGVAGKDVLMEYGGQGLYEPLDLQIAQCKLMTAGVVGAPEPKGRLRVATKFVNVAKRYYAEQGRQVDIIKLYGSMELAPLINLADKIIDVVDTGNTLRANGLEPQELIATISSRLVVNKASMKMQHARIQNLIDTLRQAVESRHRG</sequence>
<reference key="1">
    <citation type="submission" date="2008-01" db="EMBL/GenBank/DDBJ databases">
        <title>Complete sequence of Pseudomonas putida GB-1.</title>
        <authorList>
            <consortium name="US DOE Joint Genome Institute"/>
            <person name="Copeland A."/>
            <person name="Lucas S."/>
            <person name="Lapidus A."/>
            <person name="Barry K."/>
            <person name="Glavina del Rio T."/>
            <person name="Dalin E."/>
            <person name="Tice H."/>
            <person name="Pitluck S."/>
            <person name="Bruce D."/>
            <person name="Goodwin L."/>
            <person name="Chertkov O."/>
            <person name="Brettin T."/>
            <person name="Detter J.C."/>
            <person name="Han C."/>
            <person name="Kuske C.R."/>
            <person name="Schmutz J."/>
            <person name="Larimer F."/>
            <person name="Land M."/>
            <person name="Hauser L."/>
            <person name="Kyrpides N."/>
            <person name="Kim E."/>
            <person name="McCarthy J.K."/>
            <person name="Richardson P."/>
        </authorList>
    </citation>
    <scope>NUCLEOTIDE SEQUENCE [LARGE SCALE GENOMIC DNA]</scope>
    <source>
        <strain>GB-1</strain>
    </source>
</reference>
<proteinExistence type="inferred from homology"/>
<name>HIS1_PSEPG</name>
<gene>
    <name evidence="1" type="primary">hisG</name>
    <name type="ordered locus">PputGB1_0972</name>
</gene>
<feature type="chain" id="PRO_1000084159" description="ATP phosphoribosyltransferase">
    <location>
        <begin position="1"/>
        <end position="211"/>
    </location>
</feature>
<evidence type="ECO:0000255" key="1">
    <source>
        <dbReference type="HAMAP-Rule" id="MF_01018"/>
    </source>
</evidence>
<dbReference type="EC" id="2.4.2.17" evidence="1"/>
<dbReference type="EMBL" id="CP000926">
    <property type="protein sequence ID" value="ABY96882.1"/>
    <property type="molecule type" value="Genomic_DNA"/>
</dbReference>
<dbReference type="RefSeq" id="WP_012270668.1">
    <property type="nucleotide sequence ID" value="NC_010322.1"/>
</dbReference>
<dbReference type="SMR" id="B0KQJ4"/>
<dbReference type="KEGG" id="ppg:PputGB1_0972"/>
<dbReference type="eggNOG" id="COG0040">
    <property type="taxonomic scope" value="Bacteria"/>
</dbReference>
<dbReference type="HOGENOM" id="CLU_038115_2_0_6"/>
<dbReference type="UniPathway" id="UPA00031">
    <property type="reaction ID" value="UER00006"/>
</dbReference>
<dbReference type="Proteomes" id="UP000002157">
    <property type="component" value="Chromosome"/>
</dbReference>
<dbReference type="GO" id="GO:0005737">
    <property type="term" value="C:cytoplasm"/>
    <property type="evidence" value="ECO:0007669"/>
    <property type="project" value="UniProtKB-SubCell"/>
</dbReference>
<dbReference type="GO" id="GO:0005524">
    <property type="term" value="F:ATP binding"/>
    <property type="evidence" value="ECO:0007669"/>
    <property type="project" value="UniProtKB-KW"/>
</dbReference>
<dbReference type="GO" id="GO:0003879">
    <property type="term" value="F:ATP phosphoribosyltransferase activity"/>
    <property type="evidence" value="ECO:0007669"/>
    <property type="project" value="UniProtKB-UniRule"/>
</dbReference>
<dbReference type="GO" id="GO:0000105">
    <property type="term" value="P:L-histidine biosynthetic process"/>
    <property type="evidence" value="ECO:0007669"/>
    <property type="project" value="UniProtKB-UniRule"/>
</dbReference>
<dbReference type="CDD" id="cd13595">
    <property type="entry name" value="PBP2_HisGs"/>
    <property type="match status" value="1"/>
</dbReference>
<dbReference type="FunFam" id="3.40.190.10:FF:000011">
    <property type="entry name" value="ATP phosphoribosyltransferase"/>
    <property type="match status" value="1"/>
</dbReference>
<dbReference type="FunFam" id="3.40.190.10:FF:000022">
    <property type="entry name" value="ATP phosphoribosyltransferase"/>
    <property type="match status" value="1"/>
</dbReference>
<dbReference type="Gene3D" id="3.40.190.10">
    <property type="entry name" value="Periplasmic binding protein-like II"/>
    <property type="match status" value="2"/>
</dbReference>
<dbReference type="HAMAP" id="MF_01018">
    <property type="entry name" value="HisG_Short"/>
    <property type="match status" value="1"/>
</dbReference>
<dbReference type="InterPro" id="IPR013820">
    <property type="entry name" value="ATP_PRibTrfase_cat"/>
</dbReference>
<dbReference type="InterPro" id="IPR018198">
    <property type="entry name" value="ATP_PRibTrfase_CS"/>
</dbReference>
<dbReference type="InterPro" id="IPR001348">
    <property type="entry name" value="ATP_PRibTrfase_HisG"/>
</dbReference>
<dbReference type="InterPro" id="IPR024893">
    <property type="entry name" value="ATP_PRibTrfase_HisG_short"/>
</dbReference>
<dbReference type="NCBIfam" id="TIGR00070">
    <property type="entry name" value="hisG"/>
    <property type="match status" value="1"/>
</dbReference>
<dbReference type="PANTHER" id="PTHR21403:SF8">
    <property type="entry name" value="ATP PHOSPHORIBOSYLTRANSFERASE"/>
    <property type="match status" value="1"/>
</dbReference>
<dbReference type="PANTHER" id="PTHR21403">
    <property type="entry name" value="ATP PHOSPHORIBOSYLTRANSFERASE ATP-PRTASE"/>
    <property type="match status" value="1"/>
</dbReference>
<dbReference type="Pfam" id="PF01634">
    <property type="entry name" value="HisG"/>
    <property type="match status" value="1"/>
</dbReference>
<dbReference type="SUPFAM" id="SSF53850">
    <property type="entry name" value="Periplasmic binding protein-like II"/>
    <property type="match status" value="1"/>
</dbReference>
<dbReference type="PROSITE" id="PS01316">
    <property type="entry name" value="ATP_P_PHORIBOSYLTR"/>
    <property type="match status" value="1"/>
</dbReference>
<keyword id="KW-0028">Amino-acid biosynthesis</keyword>
<keyword id="KW-0067">ATP-binding</keyword>
<keyword id="KW-0963">Cytoplasm</keyword>
<keyword id="KW-0328">Glycosyltransferase</keyword>
<keyword id="KW-0368">Histidine biosynthesis</keyword>
<keyword id="KW-0547">Nucleotide-binding</keyword>
<keyword id="KW-0808">Transferase</keyword>